<proteinExistence type="evidence at protein level"/>
<keyword id="KW-0007">Acetylation</keyword>
<keyword id="KW-0903">Direct protein sequencing</keyword>
<keyword id="KW-0325">Glycoprotein</keyword>
<keyword id="KW-0496">Mitochondrion</keyword>
<keyword id="KW-0597">Phosphoprotein</keyword>
<keyword id="KW-1185">Reference proteome</keyword>
<keyword id="KW-0677">Repeat</keyword>
<keyword id="KW-0694">RNA-binding</keyword>
<keyword id="KW-0808">Transferase</keyword>
<reference key="1">
    <citation type="journal article" date="2004" name="Genome Res.">
        <title>The status, quality, and expansion of the NIH full-length cDNA project: the Mammalian Gene Collection (MGC).</title>
        <authorList>
            <consortium name="The MGC Project Team"/>
        </authorList>
    </citation>
    <scope>NUCLEOTIDE SEQUENCE [LARGE SCALE MRNA]</scope>
    <source>
        <tissue>Kidney</tissue>
    </source>
</reference>
<reference key="2">
    <citation type="journal article" date="1991" name="Biochem. J.">
        <title>Molecular cloning, sequencing and characterization of cDNA to rat liver rhodanese, a thiosulphate sulphurtransferase.</title>
        <authorList>
            <person name="Weiland K.L."/>
            <person name="Dooley T.P."/>
        </authorList>
    </citation>
    <scope>NUCLEOTIDE SEQUENCE [MRNA] OF 3-297</scope>
    <scope>FUNCTION</scope>
    <scope>TISSUE SPECIFICITY</scope>
    <source>
        <strain>Sprague-Dawley</strain>
        <tissue>Liver</tissue>
    </source>
</reference>
<reference key="3">
    <citation type="submission" date="2007-07" db="UniProtKB">
        <authorList>
            <person name="Lubec G."/>
            <person name="Afjehi-Sadat L."/>
            <person name="Kang S.U."/>
        </authorList>
    </citation>
    <scope>PROTEIN SEQUENCE OF 52-65; 123-132; 137-154; 177-183 AND 187-206</scope>
    <scope>IDENTIFICATION BY MASS SPECTROMETRY</scope>
    <source>
        <strain>Sprague-Dawley</strain>
        <tissue>Brain</tissue>
        <tissue>Spinal cord</tissue>
    </source>
</reference>
<reference key="4">
    <citation type="journal article" date="1995" name="J. Biol. Chem.">
        <title>Cytosolic mercaptopyruvate sulfurtransferase is evolutionarily related to mitochondrial rhodanese. Striking similarity in active site amino acid sequence and the increase in the mercaptopyruvate sulfurtransferase activity of rhodanese by site-directed mutagenesis.</title>
        <authorList>
            <person name="Nagahara N."/>
            <person name="Okazaki T."/>
            <person name="Nishino T."/>
        </authorList>
    </citation>
    <scope>MUTAGENESIS OF ARG-249 AND LYS-250</scope>
    <source>
        <tissue>Liver</tissue>
    </source>
</reference>
<reference key="5">
    <citation type="journal article" date="2012" name="Nat. Commun.">
        <title>Quantitative maps of protein phosphorylation sites across 14 different rat organs and tissues.</title>
        <authorList>
            <person name="Lundby A."/>
            <person name="Secher A."/>
            <person name="Lage K."/>
            <person name="Nordsborg N.B."/>
            <person name="Dmytriyev A."/>
            <person name="Lundby C."/>
            <person name="Olsen J.V."/>
        </authorList>
    </citation>
    <scope>PHOSPHORYLATION [LARGE SCALE ANALYSIS] AT SER-38</scope>
    <scope>IDENTIFICATION BY MASS SPECTROMETRY [LARGE SCALE ANALYSIS]</scope>
</reference>
<reference key="6">
    <citation type="journal article" date="2013" name="PLoS ONE">
        <title>Discovery and confirmation of O-GlcNAcylated proteins in rat liver mitochondria by combination of mass spectrometry and immunological methods.</title>
        <authorList>
            <person name="Cao W."/>
            <person name="Cao J."/>
            <person name="Huang J."/>
            <person name="Yao J."/>
            <person name="Yan G."/>
            <person name="Xu H."/>
            <person name="Yang P."/>
        </authorList>
    </citation>
    <scope>GLYCOSYLATION AT SER-35</scope>
</reference>
<sequence length="297" mass="33407">MVHQVLYRALVSTKWLAESIRSGKVGPSLRVLDASWYSPGTRQARKEYQERHVPGASFFDIEECRDTTSPYEMMLPSEAHFGDYVGNLGISNDTHVVVYDGDDLGSFYAPRVWWMFRVFGHRTVSVLNGGFRNWLKEGHPVTSEPSRPEPAVFKATLNRSLLKTYEQVLENLQSKRFQLVDSRAQGRYLGTQPEPDAVGLDSGHIRGSVNVPFMNFLTEDGFEKSPEELRAIFQDKKVDLSQPLIATCRKGVTACHIALAAYLCGKPDVAVYDGSWSEWFRRAPPETRVSQGKSGKA</sequence>
<accession>P24329</accession>
<accession>Q5I0D4</accession>
<gene>
    <name type="primary">Tst</name>
</gene>
<feature type="chain" id="PRO_0000139397" description="Thiosulfate sulfurtransferase">
    <location>
        <begin position="1"/>
        <end position="297"/>
    </location>
</feature>
<feature type="domain" description="Rhodanese 1" evidence="5">
    <location>
        <begin position="25"/>
        <end position="143"/>
    </location>
</feature>
<feature type="domain" description="Rhodanese 2" evidence="5">
    <location>
        <begin position="173"/>
        <end position="288"/>
    </location>
</feature>
<feature type="region of interest" description="Hinge">
    <location>
        <begin position="144"/>
        <end position="159"/>
    </location>
</feature>
<feature type="active site" description="Cysteine persulfide intermediate" evidence="5">
    <location>
        <position position="248"/>
    </location>
</feature>
<feature type="binding site" evidence="1">
    <location>
        <position position="187"/>
    </location>
    <ligand>
        <name>substrate</name>
    </ligand>
</feature>
<feature type="binding site" evidence="1">
    <location>
        <position position="250"/>
    </location>
    <ligand>
        <name>substrate</name>
    </ligand>
</feature>
<feature type="modified residue" description="N6-acetyllysine; alternate" evidence="4">
    <location>
        <position position="14"/>
    </location>
</feature>
<feature type="modified residue" description="N6-succinyllysine; alternate" evidence="2">
    <location>
        <position position="14"/>
    </location>
</feature>
<feature type="modified residue" description="Phosphoserine" evidence="9">
    <location>
        <position position="38"/>
    </location>
</feature>
<feature type="modified residue" description="N6-acetyllysine; alternate" evidence="3">
    <location>
        <position position="136"/>
    </location>
</feature>
<feature type="modified residue" description="N6-succinyllysine; alternate" evidence="3">
    <location>
        <position position="136"/>
    </location>
</feature>
<feature type="modified residue" description="N6-acetyllysine" evidence="3">
    <location>
        <position position="163"/>
    </location>
</feature>
<feature type="modified residue" description="N6-acetyllysine; alternate" evidence="3">
    <location>
        <position position="175"/>
    </location>
</feature>
<feature type="modified residue" description="N6-succinyllysine; alternate" evidence="3">
    <location>
        <position position="175"/>
    </location>
</feature>
<feature type="modified residue" description="N6-acetyllysine; alternate" evidence="3">
    <location>
        <position position="224"/>
    </location>
</feature>
<feature type="modified residue" description="N6-succinyllysine; alternate" evidence="3">
    <location>
        <position position="224"/>
    </location>
</feature>
<feature type="modified residue" description="N6-acetyllysine" evidence="3">
    <location>
        <position position="236"/>
    </location>
</feature>
<feature type="modified residue" description="N6-acetyllysine; alternate" evidence="3">
    <location>
        <position position="237"/>
    </location>
</feature>
<feature type="modified residue" description="N6-succinyllysine; alternate" evidence="3">
    <location>
        <position position="237"/>
    </location>
</feature>
<feature type="glycosylation site" description="O-linked (GlcNAc) serine" evidence="7">
    <location>
        <position position="35"/>
    </location>
</feature>
<feature type="mutagenesis site" description="Unaltered rhodanese activity; increased MST activity." evidence="8">
    <original>R</original>
    <variation>G</variation>
    <location>
        <position position="249"/>
    </location>
</feature>
<feature type="mutagenesis site" description="Decreased rhodanese activity; unaltered MST activity." evidence="8">
    <original>K</original>
    <variation>S</variation>
    <location>
        <position position="250"/>
    </location>
</feature>
<evidence type="ECO:0000250" key="1"/>
<evidence type="ECO:0000250" key="2">
    <source>
        <dbReference type="UniProtKB" id="P00586"/>
    </source>
</evidence>
<evidence type="ECO:0000250" key="3">
    <source>
        <dbReference type="UniProtKB" id="P52196"/>
    </source>
</evidence>
<evidence type="ECO:0000250" key="4">
    <source>
        <dbReference type="UniProtKB" id="Q16762"/>
    </source>
</evidence>
<evidence type="ECO:0000255" key="5">
    <source>
        <dbReference type="PROSITE-ProRule" id="PRU00173"/>
    </source>
</evidence>
<evidence type="ECO:0000269" key="6">
    <source>
    </source>
</evidence>
<evidence type="ECO:0000269" key="7">
    <source>
    </source>
</evidence>
<evidence type="ECO:0000269" key="8">
    <source>
    </source>
</evidence>
<evidence type="ECO:0007744" key="9">
    <source>
    </source>
</evidence>
<comment type="function">
    <text evidence="1 6">Together with MRPL18, acts as a mitochondrial import factor for the cytosolic 5S rRNA. Only the nascent unfolded cytoplasmic form is able to bind to the 5S rRNA (By similarity). Involved in the formation of iron-sulfur complexes, cyanide detoxification or modification of sulfur-containing enzymes. Other thiol compounds, besides cyanide, can act as sulfur ion acceptors. Also has weak mercaptopyruvate sulfurtransferase (MST) activity.</text>
</comment>
<comment type="catalytic activity">
    <reaction>
        <text>thiosulfate + hydrogen cyanide = thiocyanate + sulfite + 2 H(+)</text>
        <dbReference type="Rhea" id="RHEA:16881"/>
        <dbReference type="ChEBI" id="CHEBI:15378"/>
        <dbReference type="ChEBI" id="CHEBI:17359"/>
        <dbReference type="ChEBI" id="CHEBI:18022"/>
        <dbReference type="ChEBI" id="CHEBI:18407"/>
        <dbReference type="ChEBI" id="CHEBI:33542"/>
        <dbReference type="EC" id="2.8.1.1"/>
    </reaction>
</comment>
<comment type="subunit">
    <text>Monomer.</text>
</comment>
<comment type="subcellular location">
    <subcellularLocation>
        <location>Mitochondrion matrix</location>
    </subcellularLocation>
</comment>
<comment type="tissue specificity">
    <text evidence="6">Expressed in numerous tissues.</text>
</comment>
<comment type="domain">
    <text evidence="1">Contains two rhodanese domains with different primary structures but with near identical secondary structure conformations suggesting a common evolutionary origin. Only the C-terminal rhodanese domain contains the catalytic cysteine residue (By similarity).</text>
</comment>
<name>THTR_RAT</name>
<dbReference type="EC" id="2.8.1.1"/>
<dbReference type="EMBL" id="BC088449">
    <property type="protein sequence ID" value="AAH88449.1"/>
    <property type="molecule type" value="mRNA"/>
</dbReference>
<dbReference type="EMBL" id="X56228">
    <property type="protein sequence ID" value="CAA39677.1"/>
    <property type="molecule type" value="mRNA"/>
</dbReference>
<dbReference type="PIR" id="S15081">
    <property type="entry name" value="S15081"/>
</dbReference>
<dbReference type="RefSeq" id="NP_036940.1">
    <property type="nucleotide sequence ID" value="NM_012808.1"/>
</dbReference>
<dbReference type="RefSeq" id="XP_063119083.1">
    <property type="nucleotide sequence ID" value="XM_063263013.1"/>
</dbReference>
<dbReference type="SMR" id="P24329"/>
<dbReference type="FunCoup" id="P24329">
    <property type="interactions" value="1595"/>
</dbReference>
<dbReference type="STRING" id="10116.ENSRNOP00000039338"/>
<dbReference type="CarbonylDB" id="P24329"/>
<dbReference type="GlyCosmos" id="P24329">
    <property type="glycosylation" value="1 site, No reported glycans"/>
</dbReference>
<dbReference type="GlyGen" id="P24329">
    <property type="glycosylation" value="1 site, 1 O-linked glycan (1 site)"/>
</dbReference>
<dbReference type="iPTMnet" id="P24329"/>
<dbReference type="PhosphoSitePlus" id="P24329"/>
<dbReference type="SwissPalm" id="P24329"/>
<dbReference type="jPOST" id="P24329"/>
<dbReference type="PaxDb" id="10116-ENSRNOP00000039338"/>
<dbReference type="GeneID" id="25274"/>
<dbReference type="KEGG" id="rno:25274"/>
<dbReference type="UCSC" id="RGD:3913">
    <property type="organism name" value="rat"/>
</dbReference>
<dbReference type="AGR" id="RGD:3913"/>
<dbReference type="CTD" id="7263"/>
<dbReference type="RGD" id="3913">
    <property type="gene designation" value="Tst"/>
</dbReference>
<dbReference type="VEuPathDB" id="HostDB:ENSRNOG00000000186"/>
<dbReference type="eggNOG" id="KOG1529">
    <property type="taxonomic scope" value="Eukaryota"/>
</dbReference>
<dbReference type="HOGENOM" id="CLU_031618_3_1_1"/>
<dbReference type="InParanoid" id="P24329"/>
<dbReference type="PhylomeDB" id="P24329"/>
<dbReference type="TreeFam" id="TF315133"/>
<dbReference type="BRENDA" id="2.8.1.1">
    <property type="organism ID" value="5301"/>
</dbReference>
<dbReference type="Reactome" id="R-RNO-1614558">
    <property type="pathway name" value="Degradation of cysteine and homocysteine"/>
</dbReference>
<dbReference type="SABIO-RK" id="P24329"/>
<dbReference type="PRO" id="PR:P24329"/>
<dbReference type="Proteomes" id="UP000002494">
    <property type="component" value="Chromosome 7"/>
</dbReference>
<dbReference type="Bgee" id="ENSRNOG00000000186">
    <property type="expression patterns" value="Expressed in liver and 19 other cell types or tissues"/>
</dbReference>
<dbReference type="GO" id="GO:0005759">
    <property type="term" value="C:mitochondrial matrix"/>
    <property type="evidence" value="ECO:0000304"/>
    <property type="project" value="Reactome"/>
</dbReference>
<dbReference type="GO" id="GO:0005739">
    <property type="term" value="C:mitochondrion"/>
    <property type="evidence" value="ECO:0000318"/>
    <property type="project" value="GO_Central"/>
</dbReference>
<dbReference type="GO" id="GO:0016784">
    <property type="term" value="F:3-mercaptopyruvate sulfurtransferase activity"/>
    <property type="evidence" value="ECO:0000318"/>
    <property type="project" value="GO_Central"/>
</dbReference>
<dbReference type="GO" id="GO:0008097">
    <property type="term" value="F:5S rRNA binding"/>
    <property type="evidence" value="ECO:0000250"/>
    <property type="project" value="UniProtKB"/>
</dbReference>
<dbReference type="GO" id="GO:0016783">
    <property type="term" value="F:sulfurtransferase activity"/>
    <property type="evidence" value="ECO:0000304"/>
    <property type="project" value="Reactome"/>
</dbReference>
<dbReference type="GO" id="GO:0004792">
    <property type="term" value="F:thiosulfate-cyanide sulfurtransferase activity"/>
    <property type="evidence" value="ECO:0000318"/>
    <property type="project" value="GO_Central"/>
</dbReference>
<dbReference type="GO" id="GO:0030855">
    <property type="term" value="P:epithelial cell differentiation"/>
    <property type="evidence" value="ECO:0000266"/>
    <property type="project" value="RGD"/>
</dbReference>
<dbReference type="GO" id="GO:0016226">
    <property type="term" value="P:iron-sulfur cluster assembly"/>
    <property type="evidence" value="ECO:0000303"/>
    <property type="project" value="RGD"/>
</dbReference>
<dbReference type="GO" id="GO:0035928">
    <property type="term" value="P:rRNA import into mitochondrion"/>
    <property type="evidence" value="ECO:0000250"/>
    <property type="project" value="UniProtKB"/>
</dbReference>
<dbReference type="GO" id="GO:0051029">
    <property type="term" value="P:rRNA transport"/>
    <property type="evidence" value="ECO:0000250"/>
    <property type="project" value="UniProtKB"/>
</dbReference>
<dbReference type="CDD" id="cd01449">
    <property type="entry name" value="TST_Repeat_2"/>
    <property type="match status" value="1"/>
</dbReference>
<dbReference type="CDD" id="cd01445">
    <property type="entry name" value="TST_Repeats"/>
    <property type="match status" value="1"/>
</dbReference>
<dbReference type="FunFam" id="3.40.250.10:FF:000001">
    <property type="entry name" value="Sulfurtransferase"/>
    <property type="match status" value="1"/>
</dbReference>
<dbReference type="FunFam" id="3.40.250.10:FF:000008">
    <property type="entry name" value="Sulfurtransferase"/>
    <property type="match status" value="1"/>
</dbReference>
<dbReference type="Gene3D" id="3.40.250.10">
    <property type="entry name" value="Rhodanese-like domain"/>
    <property type="match status" value="2"/>
</dbReference>
<dbReference type="InterPro" id="IPR001763">
    <property type="entry name" value="Rhodanese-like_dom"/>
</dbReference>
<dbReference type="InterPro" id="IPR036873">
    <property type="entry name" value="Rhodanese-like_dom_sf"/>
</dbReference>
<dbReference type="InterPro" id="IPR001307">
    <property type="entry name" value="Thiosulphate_STrfase_CS"/>
</dbReference>
<dbReference type="InterPro" id="IPR045078">
    <property type="entry name" value="TST/MPST-like"/>
</dbReference>
<dbReference type="PANTHER" id="PTHR11364">
    <property type="entry name" value="THIOSULFATE SULFERTANSFERASE"/>
    <property type="match status" value="1"/>
</dbReference>
<dbReference type="PANTHER" id="PTHR11364:SF6">
    <property type="entry name" value="THIOSULFATE SULFURTRANSFERASE"/>
    <property type="match status" value="1"/>
</dbReference>
<dbReference type="Pfam" id="PF00581">
    <property type="entry name" value="Rhodanese"/>
    <property type="match status" value="2"/>
</dbReference>
<dbReference type="SMART" id="SM00450">
    <property type="entry name" value="RHOD"/>
    <property type="match status" value="2"/>
</dbReference>
<dbReference type="SUPFAM" id="SSF52821">
    <property type="entry name" value="Rhodanese/Cell cycle control phosphatase"/>
    <property type="match status" value="2"/>
</dbReference>
<dbReference type="PROSITE" id="PS00380">
    <property type="entry name" value="RHODANESE_1"/>
    <property type="match status" value="1"/>
</dbReference>
<dbReference type="PROSITE" id="PS00683">
    <property type="entry name" value="RHODANESE_2"/>
    <property type="match status" value="1"/>
</dbReference>
<dbReference type="PROSITE" id="PS50206">
    <property type="entry name" value="RHODANESE_3"/>
    <property type="match status" value="2"/>
</dbReference>
<protein>
    <recommendedName>
        <fullName>Thiosulfate sulfurtransferase</fullName>
        <ecNumber>2.8.1.1</ecNumber>
    </recommendedName>
    <alternativeName>
        <fullName>Rhodanese</fullName>
    </alternativeName>
</protein>
<organism>
    <name type="scientific">Rattus norvegicus</name>
    <name type="common">Rat</name>
    <dbReference type="NCBI Taxonomy" id="10116"/>
    <lineage>
        <taxon>Eukaryota</taxon>
        <taxon>Metazoa</taxon>
        <taxon>Chordata</taxon>
        <taxon>Craniata</taxon>
        <taxon>Vertebrata</taxon>
        <taxon>Euteleostomi</taxon>
        <taxon>Mammalia</taxon>
        <taxon>Eutheria</taxon>
        <taxon>Euarchontoglires</taxon>
        <taxon>Glires</taxon>
        <taxon>Rodentia</taxon>
        <taxon>Myomorpha</taxon>
        <taxon>Muroidea</taxon>
        <taxon>Muridae</taxon>
        <taxon>Murinae</taxon>
        <taxon>Rattus</taxon>
    </lineage>
</organism>